<protein>
    <recommendedName>
        <fullName>Ubiquitin-like-specific protease 1</fullName>
        <ecNumber evidence="3">3.4.22.68</ecNumber>
    </recommendedName>
</protein>
<keyword id="KW-0002">3D-structure</keyword>
<keyword id="KW-0007">Acetylation</keyword>
<keyword id="KW-0378">Hydrolase</keyword>
<keyword id="KW-0597">Phosphoprotein</keyword>
<keyword id="KW-0645">Protease</keyword>
<keyword id="KW-1185">Reference proteome</keyword>
<keyword id="KW-0788">Thiol protease</keyword>
<keyword id="KW-0833">Ubl conjugation pathway</keyword>
<evidence type="ECO:0000256" key="1">
    <source>
        <dbReference type="SAM" id="MobiDB-lite"/>
    </source>
</evidence>
<evidence type="ECO:0000269" key="2">
    <source>
    </source>
</evidence>
<evidence type="ECO:0000269" key="3">
    <source>
    </source>
</evidence>
<evidence type="ECO:0000269" key="4">
    <source>
    </source>
</evidence>
<evidence type="ECO:0000305" key="5"/>
<evidence type="ECO:0007744" key="6">
    <source>
    </source>
</evidence>
<evidence type="ECO:0007744" key="7">
    <source>
    </source>
</evidence>
<evidence type="ECO:0007744" key="8">
    <source>
    </source>
</evidence>
<evidence type="ECO:0007829" key="9">
    <source>
        <dbReference type="PDB" id="1EUV"/>
    </source>
</evidence>
<reference key="1">
    <citation type="journal article" date="1997" name="Nature">
        <title>The nucleotide sequence of Saccharomyces cerevisiae chromosome XVI.</title>
        <authorList>
            <person name="Bussey H."/>
            <person name="Storms R.K."/>
            <person name="Ahmed A."/>
            <person name="Albermann K."/>
            <person name="Allen E."/>
            <person name="Ansorge W."/>
            <person name="Araujo R."/>
            <person name="Aparicio A."/>
            <person name="Barrell B.G."/>
            <person name="Badcock K."/>
            <person name="Benes V."/>
            <person name="Botstein D."/>
            <person name="Bowman S."/>
            <person name="Brueckner M."/>
            <person name="Carpenter J."/>
            <person name="Cherry J.M."/>
            <person name="Chung E."/>
            <person name="Churcher C.M."/>
            <person name="Coster F."/>
            <person name="Davis K."/>
            <person name="Davis R.W."/>
            <person name="Dietrich F.S."/>
            <person name="Delius H."/>
            <person name="DiPaolo T."/>
            <person name="Dubois E."/>
            <person name="Duesterhoeft A."/>
            <person name="Duncan M."/>
            <person name="Floeth M."/>
            <person name="Fortin N."/>
            <person name="Friesen J.D."/>
            <person name="Fritz C."/>
            <person name="Goffeau A."/>
            <person name="Hall J."/>
            <person name="Hebling U."/>
            <person name="Heumann K."/>
            <person name="Hilbert H."/>
            <person name="Hillier L.W."/>
            <person name="Hunicke-Smith S."/>
            <person name="Hyman R.W."/>
            <person name="Johnston M."/>
            <person name="Kalman S."/>
            <person name="Kleine K."/>
            <person name="Komp C."/>
            <person name="Kurdi O."/>
            <person name="Lashkari D."/>
            <person name="Lew H."/>
            <person name="Lin A."/>
            <person name="Lin D."/>
            <person name="Louis E.J."/>
            <person name="Marathe R."/>
            <person name="Messenguy F."/>
            <person name="Mewes H.-W."/>
            <person name="Mirtipati S."/>
            <person name="Moestl D."/>
            <person name="Mueller-Auer S."/>
            <person name="Namath A."/>
            <person name="Nentwich U."/>
            <person name="Oefner P."/>
            <person name="Pearson D."/>
            <person name="Petel F.X."/>
            <person name="Pohl T.M."/>
            <person name="Purnelle B."/>
            <person name="Rajandream M.A."/>
            <person name="Rechmann S."/>
            <person name="Rieger M."/>
            <person name="Riles L."/>
            <person name="Roberts D."/>
            <person name="Schaefer M."/>
            <person name="Scharfe M."/>
            <person name="Scherens B."/>
            <person name="Schramm S."/>
            <person name="Schroeder M."/>
            <person name="Sdicu A.-M."/>
            <person name="Tettelin H."/>
            <person name="Urrestarazu L.A."/>
            <person name="Ushinsky S."/>
            <person name="Vierendeels F."/>
            <person name="Vissers S."/>
            <person name="Voss H."/>
            <person name="Walsh S.V."/>
            <person name="Wambutt R."/>
            <person name="Wang Y."/>
            <person name="Wedler E."/>
            <person name="Wedler H."/>
            <person name="Winnett E."/>
            <person name="Zhong W.-W."/>
            <person name="Zollner A."/>
            <person name="Vo D.H."/>
            <person name="Hani J."/>
        </authorList>
    </citation>
    <scope>NUCLEOTIDE SEQUENCE [LARGE SCALE GENOMIC DNA]</scope>
    <source>
        <strain>ATCC 204508 / S288c</strain>
    </source>
</reference>
<reference key="2">
    <citation type="journal article" date="2014" name="G3 (Bethesda)">
        <title>The reference genome sequence of Saccharomyces cerevisiae: Then and now.</title>
        <authorList>
            <person name="Engel S.R."/>
            <person name="Dietrich F.S."/>
            <person name="Fisk D.G."/>
            <person name="Binkley G."/>
            <person name="Balakrishnan R."/>
            <person name="Costanzo M.C."/>
            <person name="Dwight S.S."/>
            <person name="Hitz B.C."/>
            <person name="Karra K."/>
            <person name="Nash R.S."/>
            <person name="Weng S."/>
            <person name="Wong E.D."/>
            <person name="Lloyd P."/>
            <person name="Skrzypek M.S."/>
            <person name="Miyasato S.R."/>
            <person name="Simison M."/>
            <person name="Cherry J.M."/>
        </authorList>
    </citation>
    <scope>GENOME REANNOTATION</scope>
    <source>
        <strain>ATCC 204508 / S288c</strain>
    </source>
</reference>
<reference key="3">
    <citation type="journal article" date="1999" name="Nature">
        <title>A new protease required for cell-cycle progression in yeast.</title>
        <authorList>
            <person name="Li S.J."/>
            <person name="Hochstrasser M."/>
        </authorList>
    </citation>
    <scope>FUNCTION</scope>
</reference>
<reference key="4">
    <citation type="journal article" date="2003" name="Nature">
        <title>Global analysis of protein expression in yeast.</title>
        <authorList>
            <person name="Ghaemmaghami S."/>
            <person name="Huh W.-K."/>
            <person name="Bower K."/>
            <person name="Howson R.W."/>
            <person name="Belle A."/>
            <person name="Dephoure N."/>
            <person name="O'Shea E.K."/>
            <person name="Weissman J.S."/>
        </authorList>
    </citation>
    <scope>LEVEL OF PROTEIN EXPRESSION [LARGE SCALE ANALYSIS]</scope>
</reference>
<reference key="5">
    <citation type="journal article" date="2007" name="J. Proteome Res.">
        <title>Large-scale phosphorylation analysis of alpha-factor-arrested Saccharomyces cerevisiae.</title>
        <authorList>
            <person name="Li X."/>
            <person name="Gerber S.A."/>
            <person name="Rudner A.D."/>
            <person name="Beausoleil S.A."/>
            <person name="Haas W."/>
            <person name="Villen J."/>
            <person name="Elias J.E."/>
            <person name="Gygi S.P."/>
        </authorList>
    </citation>
    <scope>PHOSPHORYLATION [LARGE SCALE ANALYSIS] AT SER-21; SER-25 AND THR-179</scope>
    <scope>IDENTIFICATION BY MASS SPECTROMETRY [LARGE SCALE ANALYSIS]</scope>
    <source>
        <strain>ADR376</strain>
    </source>
</reference>
<reference key="6">
    <citation type="journal article" date="2008" name="Mol. Cell. Proteomics">
        <title>A multidimensional chromatography technology for in-depth phosphoproteome analysis.</title>
        <authorList>
            <person name="Albuquerque C.P."/>
            <person name="Smolka M.B."/>
            <person name="Payne S.H."/>
            <person name="Bafna V."/>
            <person name="Eng J."/>
            <person name="Zhou H."/>
        </authorList>
    </citation>
    <scope>PHOSPHORYLATION [LARGE SCALE ANALYSIS] AT THR-179 AND SER-264</scope>
    <scope>IDENTIFICATION BY MASS SPECTROMETRY [LARGE SCALE ANALYSIS]</scope>
</reference>
<reference key="7">
    <citation type="journal article" date="2012" name="Proc. Natl. Acad. Sci. U.S.A.">
        <title>N-terminal acetylome analyses and functional insights of the N-terminal acetyltransferase NatB.</title>
        <authorList>
            <person name="Van Damme P."/>
            <person name="Lasa M."/>
            <person name="Polevoda B."/>
            <person name="Gazquez C."/>
            <person name="Elosegui-Artola A."/>
            <person name="Kim D.S."/>
            <person name="De Juan-Pardo E."/>
            <person name="Demeyer K."/>
            <person name="Hole K."/>
            <person name="Larrea E."/>
            <person name="Timmerman E."/>
            <person name="Prieto J."/>
            <person name="Arnesen T."/>
            <person name="Sherman F."/>
            <person name="Gevaert K."/>
            <person name="Aldabe R."/>
        </authorList>
    </citation>
    <scope>ACETYLATION [LARGE SCALE ANALYSIS] AT SER-2</scope>
    <scope>CLEAVAGE OF INITIATOR METHIONINE [LARGE SCALE ANALYSIS]</scope>
    <scope>IDENTIFICATION BY MASS SPECTROMETRY [LARGE SCALE ANALYSIS]</scope>
</reference>
<reference key="8">
    <citation type="journal article" date="2000" name="Mol. Cell">
        <title>Ulp1-SUMO crystal structure and genetic analysis reveal conserved interactions and a regulatory element essential for cell growth in yeast.</title>
        <authorList>
            <person name="Mossessova E."/>
            <person name="Lima C.D."/>
        </authorList>
    </citation>
    <scope>X-RAY CRYSTALLOGRAPHY (1.6 ANGSTROMS) OF 401-621 IN COMPLEX WITH SMT3</scope>
    <scope>CATALYTIC ACTIVITY</scope>
</reference>
<gene>
    <name type="primary">ULP1</name>
    <name type="ordered locus">YPL020C</name>
    <name type="ORF">LPB11C</name>
</gene>
<feature type="initiator methionine" description="Removed" evidence="8">
    <location>
        <position position="1"/>
    </location>
</feature>
<feature type="chain" id="PRO_0000101731" description="Ubiquitin-like-specific protease 1">
    <location>
        <begin position="2"/>
        <end position="621"/>
    </location>
</feature>
<feature type="region of interest" description="Disordered" evidence="1">
    <location>
        <begin position="116"/>
        <end position="150"/>
    </location>
</feature>
<feature type="region of interest" description="Disordered" evidence="1">
    <location>
        <begin position="169"/>
        <end position="196"/>
    </location>
</feature>
<feature type="region of interest" description="Protease" evidence="3">
    <location>
        <begin position="432"/>
        <end position="621"/>
    </location>
</feature>
<feature type="compositionally biased region" description="Low complexity" evidence="1">
    <location>
        <begin position="124"/>
        <end position="141"/>
    </location>
</feature>
<feature type="compositionally biased region" description="Polar residues" evidence="1">
    <location>
        <begin position="179"/>
        <end position="196"/>
    </location>
</feature>
<feature type="active site" evidence="3">
    <location>
        <position position="514"/>
    </location>
</feature>
<feature type="active site" evidence="3">
    <location>
        <position position="531"/>
    </location>
</feature>
<feature type="active site" evidence="3">
    <location>
        <position position="580"/>
    </location>
</feature>
<feature type="modified residue" description="N-acetylserine" evidence="8">
    <location>
        <position position="2"/>
    </location>
</feature>
<feature type="modified residue" description="Phosphoserine" evidence="6">
    <location>
        <position position="21"/>
    </location>
</feature>
<feature type="modified residue" description="Phosphoserine" evidence="6">
    <location>
        <position position="25"/>
    </location>
</feature>
<feature type="modified residue" description="Phosphothreonine" evidence="6 7">
    <location>
        <position position="179"/>
    </location>
</feature>
<feature type="modified residue" description="Phosphoserine" evidence="7">
    <location>
        <position position="264"/>
    </location>
</feature>
<feature type="helix" evidence="9">
    <location>
        <begin position="409"/>
        <end position="419"/>
    </location>
</feature>
<feature type="strand" evidence="9">
    <location>
        <begin position="426"/>
        <end position="430"/>
    </location>
</feature>
<feature type="strand" evidence="9">
    <location>
        <begin position="433"/>
        <end position="436"/>
    </location>
</feature>
<feature type="helix" evidence="9">
    <location>
        <begin position="437"/>
        <end position="440"/>
    </location>
</feature>
<feature type="helix" evidence="9">
    <location>
        <begin position="441"/>
        <end position="443"/>
    </location>
</feature>
<feature type="helix" evidence="9">
    <location>
        <begin position="451"/>
        <end position="464"/>
    </location>
</feature>
<feature type="strand" evidence="9">
    <location>
        <begin position="468"/>
        <end position="470"/>
    </location>
</feature>
<feature type="helix" evidence="9">
    <location>
        <begin position="474"/>
        <end position="482"/>
    </location>
</feature>
<feature type="helix" evidence="9">
    <location>
        <begin position="484"/>
        <end position="486"/>
    </location>
</feature>
<feature type="turn" evidence="9">
    <location>
        <begin position="487"/>
        <end position="491"/>
    </location>
</feature>
<feature type="helix" evidence="9">
    <location>
        <begin position="492"/>
        <end position="494"/>
    </location>
</feature>
<feature type="helix" evidence="9">
    <location>
        <begin position="498"/>
        <end position="500"/>
    </location>
</feature>
<feature type="strand" evidence="9">
    <location>
        <begin position="502"/>
        <end position="510"/>
    </location>
</feature>
<feature type="turn" evidence="9">
    <location>
        <begin position="511"/>
        <end position="513"/>
    </location>
</feature>
<feature type="strand" evidence="9">
    <location>
        <begin position="514"/>
        <end position="521"/>
    </location>
</feature>
<feature type="turn" evidence="9">
    <location>
        <begin position="522"/>
        <end position="525"/>
    </location>
</feature>
<feature type="strand" evidence="9">
    <location>
        <begin position="526"/>
        <end position="530"/>
    </location>
</feature>
<feature type="helix" evidence="9">
    <location>
        <begin position="539"/>
        <end position="555"/>
    </location>
</feature>
<feature type="strand" evidence="9">
    <location>
        <begin position="558"/>
        <end position="560"/>
    </location>
</feature>
<feature type="strand" evidence="9">
    <location>
        <begin position="565"/>
        <end position="569"/>
    </location>
</feature>
<feature type="strand" evidence="9">
    <location>
        <begin position="575"/>
        <end position="578"/>
    </location>
</feature>
<feature type="helix" evidence="9">
    <location>
        <begin position="580"/>
        <end position="592"/>
    </location>
</feature>
<feature type="helix" evidence="9">
    <location>
        <begin position="601"/>
        <end position="616"/>
    </location>
</feature>
<feature type="turn" evidence="9">
    <location>
        <begin position="617"/>
        <end position="620"/>
    </location>
</feature>
<name>ULP1_YEAST</name>
<sequence>MSVEVDKHRNTLQYHKKNPYSPLFSPISTYRCYPRVLNNPSESRRSASFSGIYKKRTNTSRFNYLNDRRVLSMEESMKDGSDRASKAGFIGGIRETLWNSGKYLWHTFVKNEPRNFDGSEVEASGNSDVESRSSGSRSSDVPYGLRENYSSDTRKHKFDTSTWALPNKRRRIESEGVGTPSTSPISSLASQKSNCDSDNSITFSRDPFGWNKWKTSAIGSNSENNTSDQKNSYDRRQYGTAFIRKKKVAKQNINNTKLVSRAQSEEVTYLRQIFNGEYKVPKILKEERERQLKLMDMDKEKDTGLKKSIIDLTEKIKTILIENNKNRLQTRNENDDDLVFVKEKKISSLERKHKDYLNQKLKFDRSILEFEKDFKRYNEILNERKKIQEDLKKKKEQLAKKKLVPELNEKDDDQVQKALASRENTQLMNRDNIEITVRDFKTLAPRRWLNDTIIEFFMKYIEKSTPNTVAFNSFFYTNLSERGYQGVRRWMKRKKTQIDKLDKIFTPINLNQSHWALGIIDLKKKTIGYVDSLSNGPNAMSFAILTDLQKYVMEESKHTIGEDFDLIHLDCPQQPNGYDCGIYVCMNTLYGSADAPLDFDYKDAIRMRRFIAHLILTDALK</sequence>
<dbReference type="EC" id="3.4.22.68" evidence="3"/>
<dbReference type="EMBL" id="U36624">
    <property type="protein sequence ID" value="AAB68167.1"/>
    <property type="molecule type" value="Genomic_DNA"/>
</dbReference>
<dbReference type="EMBL" id="BK006949">
    <property type="protein sequence ID" value="DAA11408.1"/>
    <property type="molecule type" value="Genomic_DNA"/>
</dbReference>
<dbReference type="PIR" id="S63462">
    <property type="entry name" value="S63462"/>
</dbReference>
<dbReference type="RefSeq" id="NP_015305.1">
    <property type="nucleotide sequence ID" value="NM_001183834.1"/>
</dbReference>
<dbReference type="PDB" id="1EUV">
    <property type="method" value="X-ray"/>
    <property type="resolution" value="1.60 A"/>
    <property type="chains" value="A=403-621"/>
</dbReference>
<dbReference type="PDB" id="2HKP">
    <property type="method" value="X-ray"/>
    <property type="resolution" value="2.10 A"/>
    <property type="chains" value="A=403-621"/>
</dbReference>
<dbReference type="PDB" id="2HL8">
    <property type="method" value="X-ray"/>
    <property type="resolution" value="2.00 A"/>
    <property type="chains" value="A=403-621"/>
</dbReference>
<dbReference type="PDB" id="2HL9">
    <property type="method" value="X-ray"/>
    <property type="resolution" value="1.90 A"/>
    <property type="chains" value="A=403-621"/>
</dbReference>
<dbReference type="PDB" id="5H2V">
    <property type="method" value="X-ray"/>
    <property type="resolution" value="2.80 A"/>
    <property type="chains" value="B=1-150"/>
</dbReference>
<dbReference type="PDB" id="5H2W">
    <property type="method" value="X-ray"/>
    <property type="resolution" value="2.50 A"/>
    <property type="chains" value="B/D=150-340"/>
</dbReference>
<dbReference type="PDB" id="5H2X">
    <property type="method" value="X-ray"/>
    <property type="resolution" value="2.20 A"/>
    <property type="chains" value="B=150-172"/>
</dbReference>
<dbReference type="PDBsum" id="1EUV"/>
<dbReference type="PDBsum" id="2HKP"/>
<dbReference type="PDBsum" id="2HL8"/>
<dbReference type="PDBsum" id="2HL9"/>
<dbReference type="PDBsum" id="5H2V"/>
<dbReference type="PDBsum" id="5H2W"/>
<dbReference type="PDBsum" id="5H2X"/>
<dbReference type="SMR" id="Q02724"/>
<dbReference type="BioGRID" id="36157">
    <property type="interactions" value="473"/>
</dbReference>
<dbReference type="DIP" id="DIP-4041N"/>
<dbReference type="FunCoup" id="Q02724">
    <property type="interactions" value="1607"/>
</dbReference>
<dbReference type="IntAct" id="Q02724">
    <property type="interactions" value="14"/>
</dbReference>
<dbReference type="MINT" id="Q02724"/>
<dbReference type="STRING" id="4932.YPL020C"/>
<dbReference type="MEROPS" id="C48.001"/>
<dbReference type="iPTMnet" id="Q02724"/>
<dbReference type="PaxDb" id="4932-YPL020C"/>
<dbReference type="PeptideAtlas" id="Q02724"/>
<dbReference type="TopDownProteomics" id="Q02724"/>
<dbReference type="EnsemblFungi" id="YPL020C_mRNA">
    <property type="protein sequence ID" value="YPL020C"/>
    <property type="gene ID" value="YPL020C"/>
</dbReference>
<dbReference type="GeneID" id="856087"/>
<dbReference type="KEGG" id="sce:YPL020C"/>
<dbReference type="AGR" id="SGD:S000005941"/>
<dbReference type="SGD" id="S000005941">
    <property type="gene designation" value="ULP1"/>
</dbReference>
<dbReference type="VEuPathDB" id="FungiDB:YPL020C"/>
<dbReference type="eggNOG" id="KOG0778">
    <property type="taxonomic scope" value="Eukaryota"/>
</dbReference>
<dbReference type="GeneTree" id="ENSGT00940000167730"/>
<dbReference type="HOGENOM" id="CLU_021050_0_0_1"/>
<dbReference type="InParanoid" id="Q02724"/>
<dbReference type="OMA" id="CGIYVCM"/>
<dbReference type="OrthoDB" id="1939479at2759"/>
<dbReference type="BioCyc" id="YEAST:G3O-33938-MONOMER"/>
<dbReference type="BRENDA" id="3.4.22.68">
    <property type="organism ID" value="984"/>
</dbReference>
<dbReference type="Reactome" id="R-SCE-3065679">
    <property type="pathway name" value="SUMO is proteolytically processed"/>
</dbReference>
<dbReference type="Reactome" id="R-SCE-6791226">
    <property type="pathway name" value="Major pathway of rRNA processing in the nucleolus and cytosol"/>
</dbReference>
<dbReference type="BioGRID-ORCS" id="856087">
    <property type="hits" value="0 hits in 10 CRISPR screens"/>
</dbReference>
<dbReference type="EvolutionaryTrace" id="Q02724"/>
<dbReference type="PRO" id="PR:Q02724"/>
<dbReference type="Proteomes" id="UP000002311">
    <property type="component" value="Chromosome XVI"/>
</dbReference>
<dbReference type="RNAct" id="Q02724">
    <property type="molecule type" value="protein"/>
</dbReference>
<dbReference type="GO" id="GO:0005635">
    <property type="term" value="C:nuclear envelope"/>
    <property type="evidence" value="ECO:0000314"/>
    <property type="project" value="SGD"/>
</dbReference>
<dbReference type="GO" id="GO:0005730">
    <property type="term" value="C:nucleolus"/>
    <property type="evidence" value="ECO:0000314"/>
    <property type="project" value="SGD"/>
</dbReference>
<dbReference type="GO" id="GO:0005634">
    <property type="term" value="C:nucleus"/>
    <property type="evidence" value="ECO:0000318"/>
    <property type="project" value="GO_Central"/>
</dbReference>
<dbReference type="GO" id="GO:0008234">
    <property type="term" value="F:cysteine-type peptidase activity"/>
    <property type="evidence" value="ECO:0000314"/>
    <property type="project" value="SGD"/>
</dbReference>
<dbReference type="GO" id="GO:0016929">
    <property type="term" value="F:deSUMOylase activity"/>
    <property type="evidence" value="ECO:0000314"/>
    <property type="project" value="SGD"/>
</dbReference>
<dbReference type="GO" id="GO:0000086">
    <property type="term" value="P:G2/M transition of mitotic cell cycle"/>
    <property type="evidence" value="ECO:0000315"/>
    <property type="project" value="SGD"/>
</dbReference>
<dbReference type="GO" id="GO:0016926">
    <property type="term" value="P:protein desumoylation"/>
    <property type="evidence" value="ECO:0000314"/>
    <property type="project" value="SGD"/>
</dbReference>
<dbReference type="GO" id="GO:0006508">
    <property type="term" value="P:proteolysis"/>
    <property type="evidence" value="ECO:0007669"/>
    <property type="project" value="UniProtKB-KW"/>
</dbReference>
<dbReference type="FunFam" id="3.30.310.130:FF:000008">
    <property type="entry name" value="Ubiquitin-like-specific protease 1"/>
    <property type="match status" value="1"/>
</dbReference>
<dbReference type="Gene3D" id="1.10.418.20">
    <property type="match status" value="1"/>
</dbReference>
<dbReference type="Gene3D" id="3.30.310.130">
    <property type="entry name" value="Ubiquitin-related"/>
    <property type="match status" value="1"/>
</dbReference>
<dbReference type="InterPro" id="IPR038765">
    <property type="entry name" value="Papain-like_cys_pep_sf"/>
</dbReference>
<dbReference type="InterPro" id="IPR003653">
    <property type="entry name" value="Peptidase_C48_C"/>
</dbReference>
<dbReference type="PANTHER" id="PTHR12606">
    <property type="entry name" value="SENTRIN/SUMO-SPECIFIC PROTEASE"/>
    <property type="match status" value="1"/>
</dbReference>
<dbReference type="PANTHER" id="PTHR12606:SF154">
    <property type="entry name" value="UBIQUITIN-LIKE-SPECIFIC PROTEASE 1"/>
    <property type="match status" value="1"/>
</dbReference>
<dbReference type="Pfam" id="PF02902">
    <property type="entry name" value="Peptidase_C48"/>
    <property type="match status" value="1"/>
</dbReference>
<dbReference type="SUPFAM" id="SSF54001">
    <property type="entry name" value="Cysteine proteinases"/>
    <property type="match status" value="1"/>
</dbReference>
<dbReference type="PROSITE" id="PS50600">
    <property type="entry name" value="ULP_PROTEASE"/>
    <property type="match status" value="1"/>
</dbReference>
<proteinExistence type="evidence at protein level"/>
<comment type="function">
    <text evidence="2">Protease that catalyzes two essential functions in the SUMO pathway: processing of full-length SMT3 to its mature form and deconjugation of SMT3 from targeted proteins. Has an essential role in the G2/M phase of the cell cycle.</text>
</comment>
<comment type="catalytic activity">
    <reaction evidence="3">
        <text>Hydrolysis of the alpha-linked peptide bond in the sequence Gly-Gly-|-Ala-Thr-Tyr at the C-terminal end of the small ubiquitin-like modifier (SUMO) propeptide, Smt3, leading to the mature form of the protein. A second reaction involves the cleavage of an epsilon-linked peptide bond between the C-terminal glycine of the mature SUMO and the lysine epsilon-amino group of the target protein.</text>
        <dbReference type="EC" id="3.4.22.68"/>
    </reaction>
</comment>
<comment type="miscellaneous">
    <text evidence="4">Present with 377 molecules/cell in log phase SD medium.</text>
</comment>
<comment type="similarity">
    <text evidence="5">Belongs to the peptidase C48 family.</text>
</comment>
<accession>Q02724</accession>
<accession>D6W3Z2</accession>
<organism>
    <name type="scientific">Saccharomyces cerevisiae (strain ATCC 204508 / S288c)</name>
    <name type="common">Baker's yeast</name>
    <dbReference type="NCBI Taxonomy" id="559292"/>
    <lineage>
        <taxon>Eukaryota</taxon>
        <taxon>Fungi</taxon>
        <taxon>Dikarya</taxon>
        <taxon>Ascomycota</taxon>
        <taxon>Saccharomycotina</taxon>
        <taxon>Saccharomycetes</taxon>
        <taxon>Saccharomycetales</taxon>
        <taxon>Saccharomycetaceae</taxon>
        <taxon>Saccharomyces</taxon>
    </lineage>
</organism>